<evidence type="ECO:0000250" key="1">
    <source>
        <dbReference type="UniProtKB" id="Q9W4X7"/>
    </source>
</evidence>
<evidence type="ECO:0000255" key="2">
    <source>
        <dbReference type="HAMAP-Rule" id="MF_03006"/>
    </source>
</evidence>
<organism>
    <name type="scientific">Drosophila virilis</name>
    <name type="common">Fruit fly</name>
    <dbReference type="NCBI Taxonomy" id="7244"/>
    <lineage>
        <taxon>Eukaryota</taxon>
        <taxon>Metazoa</taxon>
        <taxon>Ecdysozoa</taxon>
        <taxon>Arthropoda</taxon>
        <taxon>Hexapoda</taxon>
        <taxon>Insecta</taxon>
        <taxon>Pterygota</taxon>
        <taxon>Neoptera</taxon>
        <taxon>Endopterygota</taxon>
        <taxon>Diptera</taxon>
        <taxon>Brachycera</taxon>
        <taxon>Muscomorpha</taxon>
        <taxon>Ephydroidea</taxon>
        <taxon>Drosophilidae</taxon>
        <taxon>Drosophila</taxon>
    </lineage>
</organism>
<sequence>MPGVETIKSSWADEVELDYGGLPPTTETIENGHKYVTEYKYNKDDKKTKVVRTYKISKQVVPKTVAKRRTWTKFGDSKNDKPGPNSQTTMVSEEIIMQFLNSKEDEKANDPLLDPSKNIAKCRICNGEHWSVNCPYKGTAMDTNLMEKKAAAAASAAVDAPKSGKYVPPFLKDSQKGGMGMRGRDDTAAIRISNLSESMTEADLEELVKKIGPQSKMYLARDKNTGLCKGFAYVHFKQRKDAAAAIEILNGHGYDHLILSVEWSKPQNN</sequence>
<feature type="chain" id="PRO_0000365425" description="Eukaryotic translation initiation factor 3 subunit G-1">
    <location>
        <begin position="1"/>
        <end position="269"/>
    </location>
</feature>
<feature type="domain" description="RRM" evidence="2">
    <location>
        <begin position="188"/>
        <end position="266"/>
    </location>
</feature>
<name>EI3G1_DROVI</name>
<protein>
    <recommendedName>
        <fullName evidence="1">Eukaryotic translation initiation factor 3 subunit G-1</fullName>
    </recommendedName>
    <alternativeName>
        <fullName evidence="2">Eukaryotic translation initiation factor 3 RNA-binding subunit 1</fullName>
        <shortName evidence="2">eIF-3 RNA-binding subunit 1</shortName>
    </alternativeName>
    <alternativeName>
        <fullName evidence="2">Eukaryotic translation initiation factor 3 subunit 4-1</fullName>
    </alternativeName>
</protein>
<accession>B4MA85</accession>
<keyword id="KW-0963">Cytoplasm</keyword>
<keyword id="KW-0396">Initiation factor</keyword>
<keyword id="KW-0648">Protein biosynthesis</keyword>
<keyword id="KW-1185">Reference proteome</keyword>
<keyword id="KW-0694">RNA-binding</keyword>
<proteinExistence type="inferred from homology"/>
<gene>
    <name evidence="1" type="primary">eIF3g1</name>
    <name evidence="2" type="synonym">eIF3-S4</name>
    <name evidence="1" type="synonym">eIF3ga</name>
    <name type="ORF">GJ15710</name>
</gene>
<dbReference type="EMBL" id="CH940655">
    <property type="protein sequence ID" value="EDW66144.1"/>
    <property type="molecule type" value="Genomic_DNA"/>
</dbReference>
<dbReference type="RefSeq" id="XP_002058036.1">
    <property type="nucleotide sequence ID" value="XM_002058000.4"/>
</dbReference>
<dbReference type="SMR" id="B4MA85"/>
<dbReference type="FunCoup" id="B4MA85">
    <property type="interactions" value="1697"/>
</dbReference>
<dbReference type="STRING" id="7244.B4MA85"/>
<dbReference type="EnsemblMetazoa" id="FBtr0231635">
    <property type="protein sequence ID" value="FBpp0230127"/>
    <property type="gene ID" value="FBgn0202898"/>
</dbReference>
<dbReference type="EnsemblMetazoa" id="XM_002058000.3">
    <property type="protein sequence ID" value="XP_002058036.1"/>
    <property type="gene ID" value="LOC6634637"/>
</dbReference>
<dbReference type="GeneID" id="6634637"/>
<dbReference type="KEGG" id="dvi:6634637"/>
<dbReference type="CTD" id="31243"/>
<dbReference type="eggNOG" id="KOG0122">
    <property type="taxonomic scope" value="Eukaryota"/>
</dbReference>
<dbReference type="HOGENOM" id="CLU_034595_0_0_1"/>
<dbReference type="InParanoid" id="B4MA85"/>
<dbReference type="OMA" id="ICQGDHF"/>
<dbReference type="OrthoDB" id="639027at2759"/>
<dbReference type="PhylomeDB" id="B4MA85"/>
<dbReference type="Proteomes" id="UP000008792">
    <property type="component" value="Unassembled WGS sequence"/>
</dbReference>
<dbReference type="GO" id="GO:0016282">
    <property type="term" value="C:eukaryotic 43S preinitiation complex"/>
    <property type="evidence" value="ECO:0007669"/>
    <property type="project" value="UniProtKB-UniRule"/>
</dbReference>
<dbReference type="GO" id="GO:0033290">
    <property type="term" value="C:eukaryotic 48S preinitiation complex"/>
    <property type="evidence" value="ECO:0007669"/>
    <property type="project" value="UniProtKB-UniRule"/>
</dbReference>
<dbReference type="GO" id="GO:0005852">
    <property type="term" value="C:eukaryotic translation initiation factor 3 complex"/>
    <property type="evidence" value="ECO:0007669"/>
    <property type="project" value="UniProtKB-UniRule"/>
</dbReference>
<dbReference type="GO" id="GO:0003723">
    <property type="term" value="F:RNA binding"/>
    <property type="evidence" value="ECO:0007669"/>
    <property type="project" value="UniProtKB-UniRule"/>
</dbReference>
<dbReference type="GO" id="GO:0003743">
    <property type="term" value="F:translation initiation factor activity"/>
    <property type="evidence" value="ECO:0007669"/>
    <property type="project" value="UniProtKB-UniRule"/>
</dbReference>
<dbReference type="GO" id="GO:0001732">
    <property type="term" value="P:formation of cytoplasmic translation initiation complex"/>
    <property type="evidence" value="ECO:0007669"/>
    <property type="project" value="UniProtKB-UniRule"/>
</dbReference>
<dbReference type="CDD" id="cd12933">
    <property type="entry name" value="eIF3G"/>
    <property type="match status" value="1"/>
</dbReference>
<dbReference type="CDD" id="cd12408">
    <property type="entry name" value="RRM_eIF3G_like"/>
    <property type="match status" value="1"/>
</dbReference>
<dbReference type="FunFam" id="3.30.70.330:FF:000828">
    <property type="entry name" value="Eukaryotic translation initiation factor 3 subunit G"/>
    <property type="match status" value="1"/>
</dbReference>
<dbReference type="Gene3D" id="3.30.70.330">
    <property type="match status" value="1"/>
</dbReference>
<dbReference type="HAMAP" id="MF_03006">
    <property type="entry name" value="eIF3g"/>
    <property type="match status" value="1"/>
</dbReference>
<dbReference type="InterPro" id="IPR017334">
    <property type="entry name" value="eIF3_g"/>
</dbReference>
<dbReference type="InterPro" id="IPR024675">
    <property type="entry name" value="eIF3g_N"/>
</dbReference>
<dbReference type="InterPro" id="IPR034240">
    <property type="entry name" value="eIF3G_RRM"/>
</dbReference>
<dbReference type="InterPro" id="IPR012677">
    <property type="entry name" value="Nucleotide-bd_a/b_plait_sf"/>
</dbReference>
<dbReference type="InterPro" id="IPR035979">
    <property type="entry name" value="RBD_domain_sf"/>
</dbReference>
<dbReference type="InterPro" id="IPR000504">
    <property type="entry name" value="RRM_dom"/>
</dbReference>
<dbReference type="PANTHER" id="PTHR10352">
    <property type="entry name" value="EUKARYOTIC TRANSLATION INITIATION FACTOR 3 SUBUNIT G"/>
    <property type="match status" value="1"/>
</dbReference>
<dbReference type="Pfam" id="PF12353">
    <property type="entry name" value="eIF3g"/>
    <property type="match status" value="1"/>
</dbReference>
<dbReference type="Pfam" id="PF00076">
    <property type="entry name" value="RRM_1"/>
    <property type="match status" value="1"/>
</dbReference>
<dbReference type="PIRSF" id="PIRSF037949">
    <property type="entry name" value="Transl_init_eIF-3_RNA-bind"/>
    <property type="match status" value="1"/>
</dbReference>
<dbReference type="SMART" id="SM00360">
    <property type="entry name" value="RRM"/>
    <property type="match status" value="1"/>
</dbReference>
<dbReference type="SUPFAM" id="SSF54928">
    <property type="entry name" value="RNA-binding domain, RBD"/>
    <property type="match status" value="1"/>
</dbReference>
<dbReference type="PROSITE" id="PS50102">
    <property type="entry name" value="RRM"/>
    <property type="match status" value="1"/>
</dbReference>
<comment type="function">
    <text evidence="2">RNA-binding component of the eukaryotic translation initiation factor 3 (eIF-3) complex, which is involved in protein synthesis of a specialized repertoire of mRNAs and, together with other initiation factors, stimulates binding of mRNA and methionyl-tRNAi to the 40S ribosome. The eIF-3 complex specifically targets and initiates translation of a subset of mRNAs involved in cell proliferation. This subunit can bind 18S rRNA.</text>
</comment>
<comment type="subunit">
    <text evidence="2">Component of the eukaryotic translation initiation factor 3 (eIF-3) complex. The eIF-3 complex interacts with pix.</text>
</comment>
<comment type="subcellular location">
    <subcellularLocation>
        <location evidence="2">Cytoplasm</location>
    </subcellularLocation>
</comment>
<comment type="similarity">
    <text evidence="2">Belongs to the eIF-3 subunit G family.</text>
</comment>
<reference key="1">
    <citation type="journal article" date="2007" name="Nature">
        <title>Evolution of genes and genomes on the Drosophila phylogeny.</title>
        <authorList>
            <consortium name="Drosophila 12 genomes consortium"/>
        </authorList>
    </citation>
    <scope>NUCLEOTIDE SEQUENCE [LARGE SCALE GENOMIC DNA]</scope>
    <source>
        <strain>Tucson 15010-1051.87</strain>
    </source>
</reference>